<name>IAA_KITAU</name>
<feature type="chain" id="PRO_0000203590" description="Alpha-amylase inhibitor AI-3688">
    <location>
        <begin position="1"/>
        <end position="36" status="greater than"/>
    </location>
</feature>
<feature type="disulfide bond" evidence="1">
    <location>
        <begin position="9"/>
        <end position="25"/>
    </location>
</feature>
<feature type="non-terminal residue">
    <location>
        <position position="36"/>
    </location>
</feature>
<reference key="1">
    <citation type="journal article" date="1985" name="FEBS Lett.">
        <title>Isolation and structure elucidation of an alpha-amylase inhibitor, AI-3688, from Streptomyces aureofaciens.</title>
        <authorList>
            <person name="Vertesy L."/>
            <person name="Tripier D."/>
        </authorList>
    </citation>
    <scope>PROTEIN SEQUENCE</scope>
    <source>
        <strain>DSM 2790</strain>
    </source>
</reference>
<evidence type="ECO:0000269" key="1">
    <source>
    </source>
</evidence>
<dbReference type="PIR" id="A01331">
    <property type="entry name" value="WISMAA"/>
</dbReference>
<dbReference type="SMR" id="P04082"/>
<dbReference type="GO" id="GO:0015066">
    <property type="term" value="F:alpha-amylase inhibitor activity"/>
    <property type="evidence" value="ECO:0007669"/>
    <property type="project" value="UniProtKB-KW"/>
</dbReference>
<dbReference type="Gene3D" id="2.60.40.20">
    <property type="entry name" value="Alpha-amylase inhibitor"/>
    <property type="match status" value="1"/>
</dbReference>
<dbReference type="InterPro" id="IPR000833">
    <property type="entry name" value="A-amylase_inhib"/>
</dbReference>
<dbReference type="InterPro" id="IPR036379">
    <property type="entry name" value="A-amylase_inhib_sf"/>
</dbReference>
<dbReference type="Pfam" id="PF01356">
    <property type="entry name" value="A_amylase_inhib"/>
    <property type="match status" value="1"/>
</dbReference>
<dbReference type="SMART" id="SM00783">
    <property type="entry name" value="A_amylase_inhib"/>
    <property type="match status" value="1"/>
</dbReference>
<dbReference type="SUPFAM" id="SSF49498">
    <property type="entry name" value="alpha-Amylase inhibitor tendamistat"/>
    <property type="match status" value="1"/>
</dbReference>
<accession>P04082</accession>
<proteinExistence type="evidence at protein level"/>
<organism>
    <name type="scientific">Kitasatospora aureofaciens</name>
    <name type="common">Streptomyces aureofaciens</name>
    <dbReference type="NCBI Taxonomy" id="1894"/>
    <lineage>
        <taxon>Bacteria</taxon>
        <taxon>Bacillati</taxon>
        <taxon>Actinomycetota</taxon>
        <taxon>Actinomycetes</taxon>
        <taxon>Kitasatosporales</taxon>
        <taxon>Streptomycetaceae</taxon>
        <taxon>Kitasatospora</taxon>
    </lineage>
</organism>
<sequence length="36" mass="3938">ATGSPAPDCVESFQSWRYTDVRNGCSDAVTVVVQYE</sequence>
<protein>
    <recommendedName>
        <fullName>Alpha-amylase inhibitor AI-3688</fullName>
    </recommendedName>
</protein>
<keyword id="KW-0022">Alpha-amylase inhibitor</keyword>
<keyword id="KW-0903">Direct protein sequencing</keyword>
<keyword id="KW-1015">Disulfide bond</keyword>
<comment type="function">
    <text>Inhibits mammalian alpha-amylases specifically but has no action on plant and microbial alpha-amylases.</text>
</comment>
<comment type="miscellaneous">
    <text>This protein is an effective inhibitor of pancreatic alpha-amylase. It is 5 times less effective against human salivary amylase.</text>
</comment>